<evidence type="ECO:0000255" key="1">
    <source>
        <dbReference type="HAMAP-Rule" id="MF_00210"/>
    </source>
</evidence>
<evidence type="ECO:0000256" key="2">
    <source>
        <dbReference type="SAM" id="MobiDB-lite"/>
    </source>
</evidence>
<gene>
    <name evidence="1" type="primary">aroA</name>
    <name type="ordered locus">TM1040_0199</name>
</gene>
<proteinExistence type="inferred from homology"/>
<organism>
    <name type="scientific">Ruegeria sp. (strain TM1040)</name>
    <name type="common">Silicibacter sp.</name>
    <dbReference type="NCBI Taxonomy" id="292414"/>
    <lineage>
        <taxon>Bacteria</taxon>
        <taxon>Pseudomonadati</taxon>
        <taxon>Pseudomonadota</taxon>
        <taxon>Alphaproteobacteria</taxon>
        <taxon>Rhodobacterales</taxon>
        <taxon>Roseobacteraceae</taxon>
        <taxon>Ruegeria</taxon>
    </lineage>
</organism>
<accession>Q1GK84</accession>
<dbReference type="EC" id="2.5.1.19" evidence="1"/>
<dbReference type="EMBL" id="CP000377">
    <property type="protein sequence ID" value="ABF62932.1"/>
    <property type="molecule type" value="Genomic_DNA"/>
</dbReference>
<dbReference type="RefSeq" id="WP_011537567.1">
    <property type="nucleotide sequence ID" value="NC_008044.1"/>
</dbReference>
<dbReference type="SMR" id="Q1GK84"/>
<dbReference type="STRING" id="292414.TM1040_0199"/>
<dbReference type="KEGG" id="sit:TM1040_0199"/>
<dbReference type="eggNOG" id="COG0128">
    <property type="taxonomic scope" value="Bacteria"/>
</dbReference>
<dbReference type="HOGENOM" id="CLU_024321_0_1_5"/>
<dbReference type="OrthoDB" id="9809920at2"/>
<dbReference type="UniPathway" id="UPA00053">
    <property type="reaction ID" value="UER00089"/>
</dbReference>
<dbReference type="Proteomes" id="UP000000636">
    <property type="component" value="Chromosome"/>
</dbReference>
<dbReference type="GO" id="GO:0005737">
    <property type="term" value="C:cytoplasm"/>
    <property type="evidence" value="ECO:0007669"/>
    <property type="project" value="UniProtKB-SubCell"/>
</dbReference>
<dbReference type="GO" id="GO:0003866">
    <property type="term" value="F:3-phosphoshikimate 1-carboxyvinyltransferase activity"/>
    <property type="evidence" value="ECO:0007669"/>
    <property type="project" value="UniProtKB-UniRule"/>
</dbReference>
<dbReference type="GO" id="GO:0008652">
    <property type="term" value="P:amino acid biosynthetic process"/>
    <property type="evidence" value="ECO:0007669"/>
    <property type="project" value="UniProtKB-KW"/>
</dbReference>
<dbReference type="GO" id="GO:0009073">
    <property type="term" value="P:aromatic amino acid family biosynthetic process"/>
    <property type="evidence" value="ECO:0007669"/>
    <property type="project" value="UniProtKB-KW"/>
</dbReference>
<dbReference type="GO" id="GO:0009423">
    <property type="term" value="P:chorismate biosynthetic process"/>
    <property type="evidence" value="ECO:0007669"/>
    <property type="project" value="UniProtKB-UniRule"/>
</dbReference>
<dbReference type="CDD" id="cd01556">
    <property type="entry name" value="EPSP_synthase"/>
    <property type="match status" value="1"/>
</dbReference>
<dbReference type="FunFam" id="3.65.10.10:FF:000005">
    <property type="entry name" value="3-phosphoshikimate 1-carboxyvinyltransferase"/>
    <property type="match status" value="1"/>
</dbReference>
<dbReference type="Gene3D" id="3.65.10.10">
    <property type="entry name" value="Enolpyruvate transferase domain"/>
    <property type="match status" value="2"/>
</dbReference>
<dbReference type="HAMAP" id="MF_00210">
    <property type="entry name" value="EPSP_synth"/>
    <property type="match status" value="1"/>
</dbReference>
<dbReference type="InterPro" id="IPR001986">
    <property type="entry name" value="Enolpyruvate_Tfrase_dom"/>
</dbReference>
<dbReference type="InterPro" id="IPR036968">
    <property type="entry name" value="Enolpyruvate_Tfrase_sf"/>
</dbReference>
<dbReference type="InterPro" id="IPR006264">
    <property type="entry name" value="EPSP_synthase"/>
</dbReference>
<dbReference type="InterPro" id="IPR023193">
    <property type="entry name" value="EPSP_synthase_CS"/>
</dbReference>
<dbReference type="InterPro" id="IPR013792">
    <property type="entry name" value="RNA3'P_cycl/enolpyr_Trfase_a/b"/>
</dbReference>
<dbReference type="NCBIfam" id="TIGR01356">
    <property type="entry name" value="aroA"/>
    <property type="match status" value="1"/>
</dbReference>
<dbReference type="PANTHER" id="PTHR21090">
    <property type="entry name" value="AROM/DEHYDROQUINATE SYNTHASE"/>
    <property type="match status" value="1"/>
</dbReference>
<dbReference type="PANTHER" id="PTHR21090:SF5">
    <property type="entry name" value="PENTAFUNCTIONAL AROM POLYPEPTIDE"/>
    <property type="match status" value="1"/>
</dbReference>
<dbReference type="Pfam" id="PF00275">
    <property type="entry name" value="EPSP_synthase"/>
    <property type="match status" value="1"/>
</dbReference>
<dbReference type="PIRSF" id="PIRSF000505">
    <property type="entry name" value="EPSPS"/>
    <property type="match status" value="1"/>
</dbReference>
<dbReference type="SUPFAM" id="SSF55205">
    <property type="entry name" value="EPT/RTPC-like"/>
    <property type="match status" value="1"/>
</dbReference>
<dbReference type="PROSITE" id="PS00104">
    <property type="entry name" value="EPSP_SYNTHASE_1"/>
    <property type="match status" value="1"/>
</dbReference>
<dbReference type="PROSITE" id="PS00885">
    <property type="entry name" value="EPSP_SYNTHASE_2"/>
    <property type="match status" value="1"/>
</dbReference>
<name>AROA_RUEST</name>
<keyword id="KW-0028">Amino-acid biosynthesis</keyword>
<keyword id="KW-0057">Aromatic amino acid biosynthesis</keyword>
<keyword id="KW-0963">Cytoplasm</keyword>
<keyword id="KW-1185">Reference proteome</keyword>
<keyword id="KW-0808">Transferase</keyword>
<comment type="function">
    <text evidence="1">Catalyzes the transfer of the enolpyruvyl moiety of phosphoenolpyruvate (PEP) to the 5-hydroxyl of shikimate-3-phosphate (S3P) to produce enolpyruvyl shikimate-3-phosphate and inorganic phosphate.</text>
</comment>
<comment type="catalytic activity">
    <reaction evidence="1">
        <text>3-phosphoshikimate + phosphoenolpyruvate = 5-O-(1-carboxyvinyl)-3-phosphoshikimate + phosphate</text>
        <dbReference type="Rhea" id="RHEA:21256"/>
        <dbReference type="ChEBI" id="CHEBI:43474"/>
        <dbReference type="ChEBI" id="CHEBI:57701"/>
        <dbReference type="ChEBI" id="CHEBI:58702"/>
        <dbReference type="ChEBI" id="CHEBI:145989"/>
        <dbReference type="EC" id="2.5.1.19"/>
    </reaction>
    <physiologicalReaction direction="left-to-right" evidence="1">
        <dbReference type="Rhea" id="RHEA:21257"/>
    </physiologicalReaction>
</comment>
<comment type="pathway">
    <text evidence="1">Metabolic intermediate biosynthesis; chorismate biosynthesis; chorismate from D-erythrose 4-phosphate and phosphoenolpyruvate: step 6/7.</text>
</comment>
<comment type="subunit">
    <text evidence="1">Monomer.</text>
</comment>
<comment type="subcellular location">
    <subcellularLocation>
        <location evidence="1">Cytoplasm</location>
    </subcellularLocation>
</comment>
<comment type="similarity">
    <text evidence="1">Belongs to the EPSP synthase family.</text>
</comment>
<feature type="chain" id="PRO_1000058617" description="3-phosphoshikimate 1-carboxyvinyltransferase">
    <location>
        <begin position="1"/>
        <end position="450"/>
    </location>
</feature>
<feature type="region of interest" description="Disordered" evidence="2">
    <location>
        <begin position="1"/>
        <end position="26"/>
    </location>
</feature>
<feature type="active site" description="Proton acceptor" evidence="1">
    <location>
        <position position="327"/>
    </location>
</feature>
<feature type="binding site" evidence="1">
    <location>
        <position position="28"/>
    </location>
    <ligand>
        <name>3-phosphoshikimate</name>
        <dbReference type="ChEBI" id="CHEBI:145989"/>
    </ligand>
</feature>
<feature type="binding site" evidence="1">
    <location>
        <position position="28"/>
    </location>
    <ligand>
        <name>phosphoenolpyruvate</name>
        <dbReference type="ChEBI" id="CHEBI:58702"/>
    </ligand>
</feature>
<feature type="binding site" evidence="1">
    <location>
        <position position="29"/>
    </location>
    <ligand>
        <name>3-phosphoshikimate</name>
        <dbReference type="ChEBI" id="CHEBI:145989"/>
    </ligand>
</feature>
<feature type="binding site" evidence="1">
    <location>
        <position position="33"/>
    </location>
    <ligand>
        <name>3-phosphoshikimate</name>
        <dbReference type="ChEBI" id="CHEBI:145989"/>
    </ligand>
</feature>
<feature type="binding site" evidence="1">
    <location>
        <position position="101"/>
    </location>
    <ligand>
        <name>phosphoenolpyruvate</name>
        <dbReference type="ChEBI" id="CHEBI:58702"/>
    </ligand>
</feature>
<feature type="binding site" evidence="1">
    <location>
        <position position="129"/>
    </location>
    <ligand>
        <name>phosphoenolpyruvate</name>
        <dbReference type="ChEBI" id="CHEBI:58702"/>
    </ligand>
</feature>
<feature type="binding site" evidence="1">
    <location>
        <position position="174"/>
    </location>
    <ligand>
        <name>3-phosphoshikimate</name>
        <dbReference type="ChEBI" id="CHEBI:145989"/>
    </ligand>
</feature>
<feature type="binding site" evidence="1">
    <location>
        <position position="176"/>
    </location>
    <ligand>
        <name>3-phosphoshikimate</name>
        <dbReference type="ChEBI" id="CHEBI:145989"/>
    </ligand>
</feature>
<feature type="binding site" evidence="1">
    <location>
        <position position="176"/>
    </location>
    <ligand>
        <name>phosphoenolpyruvate</name>
        <dbReference type="ChEBI" id="CHEBI:58702"/>
    </ligand>
</feature>
<feature type="binding site" evidence="1">
    <location>
        <position position="327"/>
    </location>
    <ligand>
        <name>3-phosphoshikimate</name>
        <dbReference type="ChEBI" id="CHEBI:145989"/>
    </ligand>
</feature>
<feature type="binding site" evidence="1">
    <location>
        <position position="354"/>
    </location>
    <ligand>
        <name>3-phosphoshikimate</name>
        <dbReference type="ChEBI" id="CHEBI:145989"/>
    </ligand>
</feature>
<feature type="binding site" evidence="1">
    <location>
        <position position="358"/>
    </location>
    <ligand>
        <name>phosphoenolpyruvate</name>
        <dbReference type="ChEBI" id="CHEBI:58702"/>
    </ligand>
</feature>
<feature type="binding site" evidence="1">
    <location>
        <position position="403"/>
    </location>
    <ligand>
        <name>phosphoenolpyruvate</name>
        <dbReference type="ChEBI" id="CHEBI:58702"/>
    </ligand>
</feature>
<sequence>MSGHGTPIPMTSRRASPLKGEAHVPGDKSISHRSLILGAMAVGETKISGLLEGEDVLDTAKAMQAFGAEVVNHGGGEWSVFGVGVGGFAEPENVIDCGNSGTGVRLIMGAMATSPITATFTGDASLNKRPMARVTDPLALFGAQSVGREGGRLPMTIVGAAEPVPVRYEVPVPSAQVKSAVLLAGLNAPGKTVVIEREATRDHSERMLAGFGAEITVEDTKEGRVITLTGQPELKPQVIAVPRDPSSAAFPVCAALITPGSDVLVPGIGLNPTRAGLFYTLQDMGADLTFENPRTEGGEPVADLRAKYSPDMKGIEVPPERAASMIDEYPVLSVVASFATGTTMMAGVKELRVKESDRIDAMAKGLRANGVTVEEGEDWWSVEGCGPEGVKGGGTAESFLDHRIAMSFMVMGMGAQNPVSVDDGSPIATSFPIFERLMGDLGASIIRTDG</sequence>
<protein>
    <recommendedName>
        <fullName evidence="1">3-phosphoshikimate 1-carboxyvinyltransferase</fullName>
        <ecNumber evidence="1">2.5.1.19</ecNumber>
    </recommendedName>
    <alternativeName>
        <fullName evidence="1">5-enolpyruvylshikimate-3-phosphate synthase</fullName>
        <shortName evidence="1">EPSP synthase</shortName>
        <shortName evidence="1">EPSPS</shortName>
    </alternativeName>
</protein>
<reference key="1">
    <citation type="submission" date="2006-05" db="EMBL/GenBank/DDBJ databases">
        <title>Complete sequence of chromosome of Silicibacter sp. TM1040.</title>
        <authorList>
            <consortium name="US DOE Joint Genome Institute"/>
            <person name="Copeland A."/>
            <person name="Lucas S."/>
            <person name="Lapidus A."/>
            <person name="Barry K."/>
            <person name="Detter J.C."/>
            <person name="Glavina del Rio T."/>
            <person name="Hammon N."/>
            <person name="Israni S."/>
            <person name="Dalin E."/>
            <person name="Tice H."/>
            <person name="Pitluck S."/>
            <person name="Brettin T."/>
            <person name="Bruce D."/>
            <person name="Han C."/>
            <person name="Tapia R."/>
            <person name="Goodwin L."/>
            <person name="Thompson L.S."/>
            <person name="Gilna P."/>
            <person name="Schmutz J."/>
            <person name="Larimer F."/>
            <person name="Land M."/>
            <person name="Hauser L."/>
            <person name="Kyrpides N."/>
            <person name="Kim E."/>
            <person name="Belas R."/>
            <person name="Moran M.A."/>
            <person name="Buchan A."/>
            <person name="Gonzalez J.M."/>
            <person name="Schell M.A."/>
            <person name="Sun F."/>
            <person name="Richardson P."/>
        </authorList>
    </citation>
    <scope>NUCLEOTIDE SEQUENCE [LARGE SCALE GENOMIC DNA]</scope>
    <source>
        <strain>TM1040</strain>
    </source>
</reference>